<feature type="chain" id="PRO_1000144308" description="Large ribosomal subunit protein uL14">
    <location>
        <begin position="1"/>
        <end position="120"/>
    </location>
</feature>
<sequence length="120" mass="12944">MIQKNSRLVVADNSGAKEVLVIGILGGTRRRYANIGDVVVVAVKSGSGGTVKKHDVLKGVIVRSKSGIRHENGSYIKFYDNALVLLKEDLSIIGTRIFGPVVRELGKKFSKIVSLAQLVL</sequence>
<organism>
    <name type="scientific">Phytoplasma australiense</name>
    <dbReference type="NCBI Taxonomy" id="59748"/>
    <lineage>
        <taxon>Bacteria</taxon>
        <taxon>Bacillati</taxon>
        <taxon>Mycoplasmatota</taxon>
        <taxon>Mollicutes</taxon>
        <taxon>Acholeplasmatales</taxon>
        <taxon>Acholeplasmataceae</taxon>
        <taxon>Candidatus Phytoplasma</taxon>
        <taxon>16SrXII (Stolbur group)</taxon>
    </lineage>
</organism>
<proteinExistence type="inferred from homology"/>
<dbReference type="EMBL" id="AM422018">
    <property type="protein sequence ID" value="CAM11911.1"/>
    <property type="molecule type" value="Genomic_DNA"/>
</dbReference>
<dbReference type="SMR" id="B1VAD8"/>
<dbReference type="STRING" id="59748.PA0577"/>
<dbReference type="KEGG" id="pal:PA0577"/>
<dbReference type="eggNOG" id="COG0093">
    <property type="taxonomic scope" value="Bacteria"/>
</dbReference>
<dbReference type="Proteomes" id="UP000008323">
    <property type="component" value="Chromosome"/>
</dbReference>
<dbReference type="GO" id="GO:0022625">
    <property type="term" value="C:cytosolic large ribosomal subunit"/>
    <property type="evidence" value="ECO:0007669"/>
    <property type="project" value="TreeGrafter"/>
</dbReference>
<dbReference type="GO" id="GO:0070180">
    <property type="term" value="F:large ribosomal subunit rRNA binding"/>
    <property type="evidence" value="ECO:0007669"/>
    <property type="project" value="TreeGrafter"/>
</dbReference>
<dbReference type="GO" id="GO:0003735">
    <property type="term" value="F:structural constituent of ribosome"/>
    <property type="evidence" value="ECO:0007669"/>
    <property type="project" value="InterPro"/>
</dbReference>
<dbReference type="GO" id="GO:0006412">
    <property type="term" value="P:translation"/>
    <property type="evidence" value="ECO:0007669"/>
    <property type="project" value="UniProtKB-UniRule"/>
</dbReference>
<dbReference type="CDD" id="cd00337">
    <property type="entry name" value="Ribosomal_uL14"/>
    <property type="match status" value="1"/>
</dbReference>
<dbReference type="Gene3D" id="2.40.150.20">
    <property type="entry name" value="Ribosomal protein L14"/>
    <property type="match status" value="1"/>
</dbReference>
<dbReference type="HAMAP" id="MF_01367">
    <property type="entry name" value="Ribosomal_uL14"/>
    <property type="match status" value="1"/>
</dbReference>
<dbReference type="InterPro" id="IPR000218">
    <property type="entry name" value="Ribosomal_uL14"/>
</dbReference>
<dbReference type="InterPro" id="IPR005745">
    <property type="entry name" value="Ribosomal_uL14_bac-type"/>
</dbReference>
<dbReference type="InterPro" id="IPR019972">
    <property type="entry name" value="Ribosomal_uL14_CS"/>
</dbReference>
<dbReference type="InterPro" id="IPR036853">
    <property type="entry name" value="Ribosomal_uL14_sf"/>
</dbReference>
<dbReference type="NCBIfam" id="TIGR01067">
    <property type="entry name" value="rplN_bact"/>
    <property type="match status" value="1"/>
</dbReference>
<dbReference type="PANTHER" id="PTHR11761">
    <property type="entry name" value="50S/60S RIBOSOMAL PROTEIN L14/L23"/>
    <property type="match status" value="1"/>
</dbReference>
<dbReference type="PANTHER" id="PTHR11761:SF3">
    <property type="entry name" value="LARGE RIBOSOMAL SUBUNIT PROTEIN UL14M"/>
    <property type="match status" value="1"/>
</dbReference>
<dbReference type="Pfam" id="PF00238">
    <property type="entry name" value="Ribosomal_L14"/>
    <property type="match status" value="1"/>
</dbReference>
<dbReference type="SMART" id="SM01374">
    <property type="entry name" value="Ribosomal_L14"/>
    <property type="match status" value="1"/>
</dbReference>
<dbReference type="SUPFAM" id="SSF50193">
    <property type="entry name" value="Ribosomal protein L14"/>
    <property type="match status" value="1"/>
</dbReference>
<dbReference type="PROSITE" id="PS00049">
    <property type="entry name" value="RIBOSOMAL_L14"/>
    <property type="match status" value="1"/>
</dbReference>
<reference key="1">
    <citation type="journal article" date="2008" name="J. Bacteriol.">
        <title>Comparative genome analysis of 'Candidatus Phytoplasma australiense' (subgroup tuf-Australia I; rp-A) and 'Ca. Phytoplasma asteris' strains OY-M and AY-WB.</title>
        <authorList>
            <person name="Tran-Nguyen L.T."/>
            <person name="Kube M."/>
            <person name="Schneider B."/>
            <person name="Reinhardt R."/>
            <person name="Gibb K.S."/>
        </authorList>
    </citation>
    <scope>NUCLEOTIDE SEQUENCE [LARGE SCALE GENOMIC DNA]</scope>
</reference>
<evidence type="ECO:0000255" key="1">
    <source>
        <dbReference type="HAMAP-Rule" id="MF_01367"/>
    </source>
</evidence>
<evidence type="ECO:0000305" key="2"/>
<protein>
    <recommendedName>
        <fullName evidence="1">Large ribosomal subunit protein uL14</fullName>
    </recommendedName>
    <alternativeName>
        <fullName evidence="2">50S ribosomal protein L14</fullName>
    </alternativeName>
</protein>
<gene>
    <name evidence="1" type="primary">rplN</name>
    <name type="ordered locus">PA0577</name>
</gene>
<comment type="function">
    <text evidence="1">Binds to 23S rRNA. Forms part of two intersubunit bridges in the 70S ribosome.</text>
</comment>
<comment type="subunit">
    <text evidence="1">Part of the 50S ribosomal subunit. Forms a cluster with proteins L3 and L19. In the 70S ribosome, L14 and L19 interact and together make contacts with the 16S rRNA in bridges B5 and B8.</text>
</comment>
<comment type="similarity">
    <text evidence="1">Belongs to the universal ribosomal protein uL14 family.</text>
</comment>
<name>RL14_PHYAS</name>
<accession>B1VAD8</accession>
<keyword id="KW-1185">Reference proteome</keyword>
<keyword id="KW-0687">Ribonucleoprotein</keyword>
<keyword id="KW-0689">Ribosomal protein</keyword>
<keyword id="KW-0694">RNA-binding</keyword>
<keyword id="KW-0699">rRNA-binding</keyword>